<reference key="1">
    <citation type="journal article" date="2008" name="Nature">
        <title>The genome of the choanoflagellate Monosiga brevicollis and the origin of metazoans.</title>
        <authorList>
            <consortium name="JGI Sequencing"/>
            <person name="King N."/>
            <person name="Westbrook M.J."/>
            <person name="Young S.L."/>
            <person name="Kuo A."/>
            <person name="Abedin M."/>
            <person name="Chapman J."/>
            <person name="Fairclough S."/>
            <person name="Hellsten U."/>
            <person name="Isogai Y."/>
            <person name="Letunic I."/>
            <person name="Marr M."/>
            <person name="Pincus D."/>
            <person name="Putnam N."/>
            <person name="Rokas A."/>
            <person name="Wright K.J."/>
            <person name="Zuzow R."/>
            <person name="Dirks W."/>
            <person name="Good M."/>
            <person name="Goodstein D."/>
            <person name="Lemons D."/>
            <person name="Li W."/>
            <person name="Lyons J.B."/>
            <person name="Morris A."/>
            <person name="Nichols S."/>
            <person name="Richter D.J."/>
            <person name="Salamov A."/>
            <person name="Bork P."/>
            <person name="Lim W.A."/>
            <person name="Manning G."/>
            <person name="Miller W.T."/>
            <person name="McGinnis W."/>
            <person name="Shapiro H."/>
            <person name="Tjian R."/>
            <person name="Grigoriev I.V."/>
            <person name="Rokhsar D."/>
        </authorList>
    </citation>
    <scope>NUCLEOTIDE SEQUENCE [LARGE SCALE GENOMIC DNA]</scope>
    <source>
        <strain>MX1 / ATCC 50154</strain>
    </source>
</reference>
<accession>A9V3C0</accession>
<protein>
    <recommendedName>
        <fullName evidence="1">Kynureninase</fullName>
        <ecNumber evidence="1">3.7.1.3</ecNumber>
    </recommendedName>
    <alternativeName>
        <fullName evidence="1">L-kynurenine hydrolase</fullName>
    </alternativeName>
</protein>
<dbReference type="EC" id="3.7.1.3" evidence="1"/>
<dbReference type="EMBL" id="CH991556">
    <property type="protein sequence ID" value="EDQ88034.1"/>
    <property type="molecule type" value="Genomic_DNA"/>
</dbReference>
<dbReference type="RefSeq" id="XP_001747110.1">
    <property type="nucleotide sequence ID" value="XM_001747058.1"/>
</dbReference>
<dbReference type="SMR" id="A9V3C0"/>
<dbReference type="FunCoup" id="A9V3C0">
    <property type="interactions" value="551"/>
</dbReference>
<dbReference type="STRING" id="81824.A9V3C0"/>
<dbReference type="EnsemblProtists" id="EDQ88034">
    <property type="protein sequence ID" value="EDQ88034"/>
    <property type="gene ID" value="MONBRDRAFT_26773"/>
</dbReference>
<dbReference type="KEGG" id="mbr:MONBRDRAFT_26773"/>
<dbReference type="eggNOG" id="KOG3846">
    <property type="taxonomic scope" value="Eukaryota"/>
</dbReference>
<dbReference type="InParanoid" id="A9V3C0"/>
<dbReference type="OMA" id="LPGWNSH"/>
<dbReference type="UniPathway" id="UPA00253">
    <property type="reaction ID" value="UER00329"/>
</dbReference>
<dbReference type="UniPathway" id="UPA00334">
    <property type="reaction ID" value="UER00455"/>
</dbReference>
<dbReference type="Proteomes" id="UP000001357">
    <property type="component" value="Unassembled WGS sequence"/>
</dbReference>
<dbReference type="GO" id="GO:0005737">
    <property type="term" value="C:cytoplasm"/>
    <property type="evidence" value="ECO:0000318"/>
    <property type="project" value="GO_Central"/>
</dbReference>
<dbReference type="GO" id="GO:0030429">
    <property type="term" value="F:kynureninase activity"/>
    <property type="evidence" value="ECO:0000318"/>
    <property type="project" value="GO_Central"/>
</dbReference>
<dbReference type="GO" id="GO:0030170">
    <property type="term" value="F:pyridoxal phosphate binding"/>
    <property type="evidence" value="ECO:0007669"/>
    <property type="project" value="UniProtKB-UniRule"/>
</dbReference>
<dbReference type="GO" id="GO:0034354">
    <property type="term" value="P:'de novo' NAD biosynthetic process from L-tryptophan"/>
    <property type="evidence" value="ECO:0007669"/>
    <property type="project" value="UniProtKB-UniRule"/>
</dbReference>
<dbReference type="GO" id="GO:0043420">
    <property type="term" value="P:anthranilate metabolic process"/>
    <property type="evidence" value="ECO:0000318"/>
    <property type="project" value="GO_Central"/>
</dbReference>
<dbReference type="GO" id="GO:0097053">
    <property type="term" value="P:L-kynurenine catabolic process"/>
    <property type="evidence" value="ECO:0007669"/>
    <property type="project" value="UniProtKB-UniRule"/>
</dbReference>
<dbReference type="GO" id="GO:0019441">
    <property type="term" value="P:L-tryptophan catabolic process to kynurenine"/>
    <property type="evidence" value="ECO:0000318"/>
    <property type="project" value="GO_Central"/>
</dbReference>
<dbReference type="GO" id="GO:0019805">
    <property type="term" value="P:quinolinate biosynthetic process"/>
    <property type="evidence" value="ECO:0007669"/>
    <property type="project" value="UniProtKB-UniRule"/>
</dbReference>
<dbReference type="FunFam" id="3.40.640.10:FF:000031">
    <property type="entry name" value="Kynureninase"/>
    <property type="match status" value="1"/>
</dbReference>
<dbReference type="Gene3D" id="3.90.1150.10">
    <property type="entry name" value="Aspartate Aminotransferase, domain 1"/>
    <property type="match status" value="1"/>
</dbReference>
<dbReference type="Gene3D" id="3.40.640.10">
    <property type="entry name" value="Type I PLP-dependent aspartate aminotransferase-like (Major domain)"/>
    <property type="match status" value="1"/>
</dbReference>
<dbReference type="HAMAP" id="MF_01970">
    <property type="entry name" value="Kynureninase"/>
    <property type="match status" value="1"/>
</dbReference>
<dbReference type="InterPro" id="IPR010111">
    <property type="entry name" value="Kynureninase"/>
</dbReference>
<dbReference type="InterPro" id="IPR015424">
    <property type="entry name" value="PyrdxlP-dep_Trfase"/>
</dbReference>
<dbReference type="InterPro" id="IPR015421">
    <property type="entry name" value="PyrdxlP-dep_Trfase_major"/>
</dbReference>
<dbReference type="InterPro" id="IPR015422">
    <property type="entry name" value="PyrdxlP-dep_Trfase_small"/>
</dbReference>
<dbReference type="NCBIfam" id="TIGR01814">
    <property type="entry name" value="kynureninase"/>
    <property type="match status" value="1"/>
</dbReference>
<dbReference type="PANTHER" id="PTHR14084">
    <property type="entry name" value="KYNURENINASE"/>
    <property type="match status" value="1"/>
</dbReference>
<dbReference type="PANTHER" id="PTHR14084:SF0">
    <property type="entry name" value="KYNURENINASE"/>
    <property type="match status" value="1"/>
</dbReference>
<dbReference type="Pfam" id="PF22580">
    <property type="entry name" value="KYNU_C"/>
    <property type="match status" value="1"/>
</dbReference>
<dbReference type="PIRSF" id="PIRSF038800">
    <property type="entry name" value="KYNU"/>
    <property type="match status" value="1"/>
</dbReference>
<dbReference type="SUPFAM" id="SSF53383">
    <property type="entry name" value="PLP-dependent transferases"/>
    <property type="match status" value="1"/>
</dbReference>
<organism>
    <name type="scientific">Monosiga brevicollis</name>
    <name type="common">Choanoflagellate</name>
    <dbReference type="NCBI Taxonomy" id="81824"/>
    <lineage>
        <taxon>Eukaryota</taxon>
        <taxon>Choanoflagellata</taxon>
        <taxon>Craspedida</taxon>
        <taxon>Salpingoecidae</taxon>
        <taxon>Monosiga</taxon>
    </lineage>
</organism>
<proteinExistence type="inferred from homology"/>
<name>KYNU_MONBE</name>
<feature type="chain" id="PRO_0000361087" description="Kynureninase">
    <location>
        <begin position="1"/>
        <end position="460"/>
    </location>
</feature>
<feature type="binding site" evidence="1">
    <location>
        <position position="127"/>
    </location>
    <ligand>
        <name>pyridoxal 5'-phosphate</name>
        <dbReference type="ChEBI" id="CHEBI:597326"/>
    </ligand>
</feature>
<feature type="binding site" evidence="1">
    <location>
        <position position="128"/>
    </location>
    <ligand>
        <name>pyridoxal 5'-phosphate</name>
        <dbReference type="ChEBI" id="CHEBI:597326"/>
    </ligand>
</feature>
<feature type="binding site" evidence="1">
    <location>
        <begin position="165"/>
        <end position="168"/>
    </location>
    <ligand>
        <name>pyridoxal 5'-phosphate</name>
        <dbReference type="ChEBI" id="CHEBI:597326"/>
    </ligand>
</feature>
<feature type="binding site" evidence="1">
    <location>
        <position position="249"/>
    </location>
    <ligand>
        <name>pyridoxal 5'-phosphate</name>
        <dbReference type="ChEBI" id="CHEBI:597326"/>
    </ligand>
</feature>
<feature type="binding site" evidence="1">
    <location>
        <position position="252"/>
    </location>
    <ligand>
        <name>pyridoxal 5'-phosphate</name>
        <dbReference type="ChEBI" id="CHEBI:597326"/>
    </ligand>
</feature>
<feature type="binding site" evidence="1">
    <location>
        <position position="274"/>
    </location>
    <ligand>
        <name>pyridoxal 5'-phosphate</name>
        <dbReference type="ChEBI" id="CHEBI:597326"/>
    </ligand>
</feature>
<feature type="binding site" evidence="1">
    <location>
        <position position="304"/>
    </location>
    <ligand>
        <name>pyridoxal 5'-phosphate</name>
        <dbReference type="ChEBI" id="CHEBI:597326"/>
    </ligand>
</feature>
<feature type="binding site" evidence="1">
    <location>
        <position position="332"/>
    </location>
    <ligand>
        <name>pyridoxal 5'-phosphate</name>
        <dbReference type="ChEBI" id="CHEBI:597326"/>
    </ligand>
</feature>
<feature type="modified residue" description="N6-(pyridoxal phosphate)lysine" evidence="1">
    <location>
        <position position="275"/>
    </location>
</feature>
<sequence>MHLARELGVNLADQRLAQALDEADPLAHLRQEFSIPQMKDIKQADLKLVEAESDCIYLCGNSLGLMPKRTRTIVNEELDTWATGGVTGHFPDGPGKRPWVSIDETVTDKCARVVGALPEEVAIMNTLTVNLHLLMVSLAHTMARQVPFYRPTSDRFKILVEAKAFPSDHFAVLSQLRMHGHDESALIEVKPREGEHNIREEDLLAILEEQGDSIATVLVGGVHYYTGQFFDLQRLCAAAHNKGCTFGVDLAHAVGNVPLQLHDWDIDFACWCTYKYLNSGPGGIAGAFIHKKHEGTSRPYLQGWWGVQLNERFRMDHDASFMPGVRGLQLSNPGVLQTVALLGSLEIYEQTDMASLRAKSLKLTAYLEQLMQALVNEEGHAPRFEIITPTDPERRGCQLSILFKVDIDAAFEALEKRGVVCDVRRPDVMRIAPVPLYNTFTDVYRFVTTLRDALNASASS</sequence>
<evidence type="ECO:0000255" key="1">
    <source>
        <dbReference type="HAMAP-Rule" id="MF_03017"/>
    </source>
</evidence>
<keyword id="KW-0963">Cytoplasm</keyword>
<keyword id="KW-0378">Hydrolase</keyword>
<keyword id="KW-0662">Pyridine nucleotide biosynthesis</keyword>
<keyword id="KW-0663">Pyridoxal phosphate</keyword>
<keyword id="KW-1185">Reference proteome</keyword>
<comment type="function">
    <text evidence="1">Catalyzes the cleavage of L-kynurenine (L-Kyn) and L-3-hydroxykynurenine (L-3OHKyn) into anthranilic acid (AA) and 3-hydroxyanthranilic acid (3-OHAA), respectively.</text>
</comment>
<comment type="catalytic activity">
    <reaction evidence="1">
        <text>L-kynurenine + H2O = anthranilate + L-alanine + H(+)</text>
        <dbReference type="Rhea" id="RHEA:16813"/>
        <dbReference type="ChEBI" id="CHEBI:15377"/>
        <dbReference type="ChEBI" id="CHEBI:15378"/>
        <dbReference type="ChEBI" id="CHEBI:16567"/>
        <dbReference type="ChEBI" id="CHEBI:57959"/>
        <dbReference type="ChEBI" id="CHEBI:57972"/>
        <dbReference type="EC" id="3.7.1.3"/>
    </reaction>
</comment>
<comment type="catalytic activity">
    <reaction evidence="1">
        <text>3-hydroxy-L-kynurenine + H2O = 3-hydroxyanthranilate + L-alanine + H(+)</text>
        <dbReference type="Rhea" id="RHEA:25143"/>
        <dbReference type="ChEBI" id="CHEBI:15377"/>
        <dbReference type="ChEBI" id="CHEBI:15378"/>
        <dbReference type="ChEBI" id="CHEBI:36559"/>
        <dbReference type="ChEBI" id="CHEBI:57972"/>
        <dbReference type="ChEBI" id="CHEBI:58125"/>
        <dbReference type="EC" id="3.7.1.3"/>
    </reaction>
</comment>
<comment type="cofactor">
    <cofactor evidence="1">
        <name>pyridoxal 5'-phosphate</name>
        <dbReference type="ChEBI" id="CHEBI:597326"/>
    </cofactor>
</comment>
<comment type="pathway">
    <text evidence="1">Amino-acid degradation; L-kynurenine degradation; L-alanine and anthranilate from L-kynurenine: step 1/1.</text>
</comment>
<comment type="pathway">
    <text evidence="1">Cofactor biosynthesis; NAD(+) biosynthesis; quinolinate from L-kynurenine: step 2/3.</text>
</comment>
<comment type="subunit">
    <text evidence="1">Homodimer.</text>
</comment>
<comment type="subcellular location">
    <subcellularLocation>
        <location evidence="1">Cytoplasm</location>
    </subcellularLocation>
</comment>
<comment type="similarity">
    <text evidence="1">Belongs to the kynureninase family.</text>
</comment>
<gene>
    <name evidence="1" type="primary">kynu</name>
    <name type="ORF">26773</name>
</gene>